<protein>
    <recommendedName>
        <fullName evidence="1">DNA-directed RNA polymerase subunit alpha</fullName>
        <shortName evidence="1">PEP</shortName>
        <ecNumber evidence="1">2.7.7.6</ecNumber>
    </recommendedName>
    <alternativeName>
        <fullName evidence="1">Plastid-encoded RNA polymerase subunit alpha</fullName>
        <shortName evidence="1">RNA polymerase subunit alpha</shortName>
    </alternativeName>
</protein>
<comment type="function">
    <text evidence="1">DNA-dependent RNA polymerase catalyzes the transcription of DNA into RNA using the four ribonucleoside triphosphates as substrates.</text>
</comment>
<comment type="catalytic activity">
    <reaction evidence="1">
        <text>RNA(n) + a ribonucleoside 5'-triphosphate = RNA(n+1) + diphosphate</text>
        <dbReference type="Rhea" id="RHEA:21248"/>
        <dbReference type="Rhea" id="RHEA-COMP:14527"/>
        <dbReference type="Rhea" id="RHEA-COMP:17342"/>
        <dbReference type="ChEBI" id="CHEBI:33019"/>
        <dbReference type="ChEBI" id="CHEBI:61557"/>
        <dbReference type="ChEBI" id="CHEBI:140395"/>
        <dbReference type="EC" id="2.7.7.6"/>
    </reaction>
</comment>
<comment type="subunit">
    <text evidence="1">In plastids the minimal PEP RNA polymerase catalytic core is composed of four subunits: alpha, beta, beta', and beta''. When a (nuclear-encoded) sigma factor is associated with the core the holoenzyme is formed, which can initiate transcription.</text>
</comment>
<comment type="subcellular location">
    <subcellularLocation>
        <location>Plastid</location>
        <location>Chloroplast</location>
    </subcellularLocation>
</comment>
<comment type="domain">
    <text evidence="1">The N-terminal domain is essential for RNAP assembly and basal transcription, whereas the C-terminal domain is involved in interaction with transcriptional regulators and with upstream promoter elements.</text>
</comment>
<comment type="similarity">
    <text evidence="1">Belongs to the RNA polymerase alpha chain family.</text>
</comment>
<organism>
    <name type="scientific">Platanus occidentalis</name>
    <name type="common">Sycamore</name>
    <name type="synonym">American plane tree</name>
    <dbReference type="NCBI Taxonomy" id="4403"/>
    <lineage>
        <taxon>Eukaryota</taxon>
        <taxon>Viridiplantae</taxon>
        <taxon>Streptophyta</taxon>
        <taxon>Embryophyta</taxon>
        <taxon>Tracheophyta</taxon>
        <taxon>Spermatophyta</taxon>
        <taxon>Magnoliopsida</taxon>
        <taxon>Proteales</taxon>
        <taxon>Platanaceae</taxon>
        <taxon>Platanus</taxon>
    </lineage>
</organism>
<name>RPOA_PLAOC</name>
<proteinExistence type="inferred from homology"/>
<gene>
    <name evidence="1" type="primary">rpoA</name>
</gene>
<keyword id="KW-0150">Chloroplast</keyword>
<keyword id="KW-0240">DNA-directed RNA polymerase</keyword>
<keyword id="KW-0548">Nucleotidyltransferase</keyword>
<keyword id="KW-0934">Plastid</keyword>
<keyword id="KW-0804">Transcription</keyword>
<keyword id="KW-0808">Transferase</keyword>
<dbReference type="EC" id="2.7.7.6" evidence="1"/>
<dbReference type="EMBL" id="DQ923116">
    <property type="protein sequence ID" value="ABI49811.1"/>
    <property type="molecule type" value="Genomic_DNA"/>
</dbReference>
<dbReference type="RefSeq" id="YP_740597.1">
    <property type="nucleotide sequence ID" value="NC_008335.1"/>
</dbReference>
<dbReference type="SMR" id="Q09G14"/>
<dbReference type="GeneID" id="4271272"/>
<dbReference type="GO" id="GO:0009507">
    <property type="term" value="C:chloroplast"/>
    <property type="evidence" value="ECO:0007669"/>
    <property type="project" value="UniProtKB-SubCell"/>
</dbReference>
<dbReference type="GO" id="GO:0000428">
    <property type="term" value="C:DNA-directed RNA polymerase complex"/>
    <property type="evidence" value="ECO:0007669"/>
    <property type="project" value="UniProtKB-KW"/>
</dbReference>
<dbReference type="GO" id="GO:0005739">
    <property type="term" value="C:mitochondrion"/>
    <property type="evidence" value="ECO:0007669"/>
    <property type="project" value="GOC"/>
</dbReference>
<dbReference type="GO" id="GO:0003677">
    <property type="term" value="F:DNA binding"/>
    <property type="evidence" value="ECO:0007669"/>
    <property type="project" value="UniProtKB-UniRule"/>
</dbReference>
<dbReference type="GO" id="GO:0003899">
    <property type="term" value="F:DNA-directed RNA polymerase activity"/>
    <property type="evidence" value="ECO:0007669"/>
    <property type="project" value="UniProtKB-UniRule"/>
</dbReference>
<dbReference type="GO" id="GO:0046983">
    <property type="term" value="F:protein dimerization activity"/>
    <property type="evidence" value="ECO:0007669"/>
    <property type="project" value="InterPro"/>
</dbReference>
<dbReference type="GO" id="GO:0006351">
    <property type="term" value="P:DNA-templated transcription"/>
    <property type="evidence" value="ECO:0007669"/>
    <property type="project" value="UniProtKB-UniRule"/>
</dbReference>
<dbReference type="CDD" id="cd06928">
    <property type="entry name" value="RNAP_alpha_NTD"/>
    <property type="match status" value="1"/>
</dbReference>
<dbReference type="FunFam" id="1.10.150.20:FF:000021">
    <property type="entry name" value="DNA-directed RNA polymerase subunit alpha"/>
    <property type="match status" value="1"/>
</dbReference>
<dbReference type="FunFam" id="2.170.120.12:FF:000001">
    <property type="entry name" value="DNA-directed RNA polymerase subunit alpha"/>
    <property type="match status" value="1"/>
</dbReference>
<dbReference type="FunFam" id="3.30.1360.10:FF:000039">
    <property type="entry name" value="DNA-directed RNA polymerase subunit alpha"/>
    <property type="match status" value="1"/>
</dbReference>
<dbReference type="Gene3D" id="1.10.150.20">
    <property type="entry name" value="5' to 3' exonuclease, C-terminal subdomain"/>
    <property type="match status" value="1"/>
</dbReference>
<dbReference type="Gene3D" id="2.170.120.12">
    <property type="entry name" value="DNA-directed RNA polymerase, insert domain"/>
    <property type="match status" value="1"/>
</dbReference>
<dbReference type="Gene3D" id="3.30.1360.10">
    <property type="entry name" value="RNA polymerase, RBP11-like subunit"/>
    <property type="match status" value="1"/>
</dbReference>
<dbReference type="HAMAP" id="MF_00059">
    <property type="entry name" value="RNApol_bact_RpoA"/>
    <property type="match status" value="1"/>
</dbReference>
<dbReference type="InterPro" id="IPR011262">
    <property type="entry name" value="DNA-dir_RNA_pol_insert"/>
</dbReference>
<dbReference type="InterPro" id="IPR011263">
    <property type="entry name" value="DNA-dir_RNA_pol_RpoA/D/Rpb3"/>
</dbReference>
<dbReference type="InterPro" id="IPR011773">
    <property type="entry name" value="DNA-dir_RpoA"/>
</dbReference>
<dbReference type="InterPro" id="IPR036603">
    <property type="entry name" value="RBP11-like"/>
</dbReference>
<dbReference type="InterPro" id="IPR011260">
    <property type="entry name" value="RNAP_asu_C"/>
</dbReference>
<dbReference type="InterPro" id="IPR036643">
    <property type="entry name" value="RNApol_insert_sf"/>
</dbReference>
<dbReference type="NCBIfam" id="TIGR02027">
    <property type="entry name" value="rpoA"/>
    <property type="match status" value="1"/>
</dbReference>
<dbReference type="Pfam" id="PF01000">
    <property type="entry name" value="RNA_pol_A_bac"/>
    <property type="match status" value="1"/>
</dbReference>
<dbReference type="Pfam" id="PF03118">
    <property type="entry name" value="RNA_pol_A_CTD"/>
    <property type="match status" value="1"/>
</dbReference>
<dbReference type="Pfam" id="PF01193">
    <property type="entry name" value="RNA_pol_L"/>
    <property type="match status" value="1"/>
</dbReference>
<dbReference type="SMART" id="SM00662">
    <property type="entry name" value="RPOLD"/>
    <property type="match status" value="1"/>
</dbReference>
<dbReference type="SUPFAM" id="SSF47789">
    <property type="entry name" value="C-terminal domain of RNA polymerase alpha subunit"/>
    <property type="match status" value="1"/>
</dbReference>
<dbReference type="SUPFAM" id="SSF56553">
    <property type="entry name" value="Insert subdomain of RNA polymerase alpha subunit"/>
    <property type="match status" value="1"/>
</dbReference>
<dbReference type="SUPFAM" id="SSF55257">
    <property type="entry name" value="RBP11-like subunits of RNA polymerase"/>
    <property type="match status" value="1"/>
</dbReference>
<sequence length="337" mass="38743">MVREKVTVSTRTLQWKCVESRADSKRLYYGRFILSPLIKGQADTIGIAMRRALLGEIEGTCITRAKSEKIPHEYSTIVGIEESVHEILMNLKEIVLRSNLYGTRNASICIRGPGYVTAQDIISPPSVETVDNTQHIANLTEPIDFCIELEIERNRGYRMKTPNNSQDGSYPIDAVFMPVRNANHSIHSYANGNEKQEILFLEIWTNGSLTPKEALHEASRNLIDLFIPFLHAQEENILLEDNQNGVTLPFFTFHDRLAKIRKNEKEIALKYIFIDQSELPPRTYNCLKRSNIHTLLDLFNNSQEDLMKIEDFRIEDVKQILGILQKHFTVDLPKNKF</sequence>
<accession>Q09G14</accession>
<evidence type="ECO:0000255" key="1">
    <source>
        <dbReference type="HAMAP-Rule" id="MF_00059"/>
    </source>
</evidence>
<feature type="chain" id="PRO_0000296905" description="DNA-directed RNA polymerase subunit alpha">
    <location>
        <begin position="1"/>
        <end position="337"/>
    </location>
</feature>
<feature type="region of interest" description="Alpha N-terminal domain (alpha-NTD)" evidence="1">
    <location>
        <begin position="1"/>
        <end position="233"/>
    </location>
</feature>
<feature type="region of interest" description="Alpha C-terminal domain (alpha-CTD)" evidence="1">
    <location>
        <begin position="267"/>
        <end position="337"/>
    </location>
</feature>
<geneLocation type="chloroplast"/>
<reference key="1">
    <citation type="journal article" date="2006" name="BMC Plant Biol.">
        <title>Rapid and accurate pyrosequencing of angiosperm plastid genomes.</title>
        <authorList>
            <person name="Moore M.J."/>
            <person name="Dhingra A."/>
            <person name="Soltis P.S."/>
            <person name="Shaw R."/>
            <person name="Farmerie W.G."/>
            <person name="Folta K.M."/>
            <person name="Soltis D.E."/>
        </authorList>
    </citation>
    <scope>NUCLEOTIDE SEQUENCE [LARGE SCALE GENOMIC DNA]</scope>
</reference>